<evidence type="ECO:0000255" key="1">
    <source>
        <dbReference type="PROSITE-ProRule" id="PRU00768"/>
    </source>
</evidence>
<evidence type="ECO:0000256" key="2">
    <source>
        <dbReference type="SAM" id="MobiDB-lite"/>
    </source>
</evidence>
<evidence type="ECO:0000305" key="3"/>
<organismHost>
    <name type="scientific">Chaetoceros setoense</name>
    <dbReference type="NCBI Taxonomy" id="1290580"/>
</organismHost>
<protein>
    <recommendedName>
        <fullName>Capsid protein</fullName>
    </recommendedName>
</protein>
<proteinExistence type="predicted"/>
<keyword id="KW-1048">Host nucleus</keyword>
<keyword id="KW-1185">Reference proteome</keyword>
<keyword id="KW-0946">Virion</keyword>
<comment type="function">
    <text evidence="3">Self-assembles to form the virion icosahedral capsid.</text>
</comment>
<comment type="subcellular location">
    <subcellularLocation>
        <location evidence="3">Host nucleus</location>
    </subcellularLocation>
    <subcellularLocation>
        <location evidence="3">Virion</location>
    </subcellularLocation>
</comment>
<dbReference type="EMBL" id="AB781089">
    <property type="status" value="NOT_ANNOTATED_CDS"/>
    <property type="molecule type" value="Genomic_DNA"/>
</dbReference>
<dbReference type="SMR" id="P0DOK2"/>
<dbReference type="Proteomes" id="UP000817156">
    <property type="component" value="Segment"/>
</dbReference>
<dbReference type="GO" id="GO:0042025">
    <property type="term" value="C:host cell nucleus"/>
    <property type="evidence" value="ECO:0007669"/>
    <property type="project" value="UniProtKB-SubCell"/>
</dbReference>
<dbReference type="GO" id="GO:0044423">
    <property type="term" value="C:virion component"/>
    <property type="evidence" value="ECO:0007669"/>
    <property type="project" value="UniProtKB-KW"/>
</dbReference>
<name>CAPSD_CDDV1</name>
<sequence length="395" mass="44042">MARKYAKRSKSRPRTARRSPKSRSRPRSRAPRRKAPSRPRIQRVNPVRRPMNSTAAQSLAIYRNPFSHSPGQPKIPDGKAIMSIGSKVQVSAQLLNKASGDDILHVFLYPGLTQGMVVFGDSKEQGTRGFTAYGYNDHMTYDASSVYNAGTGADGNIESNDNINEWRLVSQGLKLSLLNTDEENDGWFECVRYKDALRANEFAFYSGDNLEQTTATVFGPDITFGSTLLTKNLVNSPTYVSGALEDIDKYEFKLQAQSEQHDFKRIPDRWYTEHGVDTVTVSGVNDYVTLQADTAQAHSIHNSLVDDSFDAVYIRIHCRTNSGAGATTGSKLLAHLVSNQELVYDEDQNEHKFMTQAAMAKAEFMKANEMARKSQVGADMIGNVRSGVRSQRRPR</sequence>
<organism>
    <name type="scientific">Chaetoceros diatodnavirus 1</name>
    <name type="common">Chaetoceros setoense DNA virus</name>
    <dbReference type="NCBI Taxonomy" id="1290581"/>
    <lineage>
        <taxon>Viruses</taxon>
        <taxon>Monodnaviria</taxon>
        <taxon>Shotokuvirae</taxon>
        <taxon>Cressdnaviricota</taxon>
        <taxon>Arfiviricetes</taxon>
        <taxon>Baphyvirales</taxon>
        <taxon>Bacilladnaviridae</taxon>
        <taxon>Diatodnavirus</taxon>
        <taxon>Diatodnavirus chaese</taxon>
    </lineage>
</organism>
<accession>P0DOK2</accession>
<feature type="chain" id="PRO_0000445650" description="Capsid protein">
    <location>
        <begin position="1"/>
        <end position="395"/>
    </location>
</feature>
<feature type="region of interest" description="Disordered" evidence="2">
    <location>
        <begin position="1"/>
        <end position="51"/>
    </location>
</feature>
<feature type="short sequence motif" description="Nuclear localization signal" evidence="1">
    <location>
        <begin position="2"/>
        <end position="9"/>
    </location>
</feature>
<feature type="compositionally biased region" description="Basic residues" evidence="2">
    <location>
        <begin position="1"/>
        <end position="41"/>
    </location>
</feature>
<reference key="1">
    <citation type="journal article" date="2013" name="Sci. Rep.">
        <title>New single-stranded DNA virus with a unique genomic structure that infects marine diatom Chaetoceros setoensis.</title>
        <authorList>
            <person name="Tomaru Y."/>
            <person name="Toyoda K."/>
            <person name="Suzuki H."/>
            <person name="Nagumo T."/>
            <person name="Kimura K."/>
            <person name="Takao Y."/>
        </authorList>
    </citation>
    <scope>NUCLEOTIDE SEQUENCE [LARGE SCALE GENOMIC DNA]</scope>
</reference>